<keyword id="KW-1185">Reference proteome</keyword>
<keyword id="KW-0687">Ribonucleoprotein</keyword>
<keyword id="KW-0689">Ribosomal protein</keyword>
<keyword id="KW-0694">RNA-binding</keyword>
<keyword id="KW-0699">rRNA-binding</keyword>
<keyword id="KW-0820">tRNA-binding</keyword>
<sequence length="122" mass="14002">MARIAGVDLPREKRIEVALTYIYGIGRSTARRVIRETGVDPDTRVRDLAEGEIAALRRYIDENLKVEGDLKREVNQNIRRLMDIGCYRGLRHRRGLPVRGQRTKTNARQRKGPRPAIGGRKK</sequence>
<comment type="function">
    <text evidence="1">Located at the top of the head of the 30S subunit, it contacts several helices of the 16S rRNA. In the 70S ribosome it contacts the 23S rRNA (bridge B1a) and protein L5 of the 50S subunit (bridge B1b), connecting the 2 subunits; these bridges are implicated in subunit movement. Contacts the tRNAs in the A and P-sites.</text>
</comment>
<comment type="subunit">
    <text evidence="1">Part of the 30S ribosomal subunit. Forms a loose heterodimer with protein S19. Forms two bridges to the 50S subunit in the 70S ribosome.</text>
</comment>
<comment type="similarity">
    <text evidence="1">Belongs to the universal ribosomal protein uS13 family.</text>
</comment>
<protein>
    <recommendedName>
        <fullName evidence="1">Small ribosomal subunit protein uS13</fullName>
    </recommendedName>
    <alternativeName>
        <fullName evidence="3">30S ribosomal protein S13</fullName>
    </alternativeName>
</protein>
<name>RS13_RUBXD</name>
<dbReference type="EMBL" id="CP000386">
    <property type="protein sequence ID" value="ABG05075.1"/>
    <property type="molecule type" value="Genomic_DNA"/>
</dbReference>
<dbReference type="RefSeq" id="WP_011565090.1">
    <property type="nucleotide sequence ID" value="NC_008148.1"/>
</dbReference>
<dbReference type="SMR" id="Q1AU53"/>
<dbReference type="STRING" id="266117.Rxyl_2131"/>
<dbReference type="KEGG" id="rxy:Rxyl_2131"/>
<dbReference type="eggNOG" id="COG0099">
    <property type="taxonomic scope" value="Bacteria"/>
</dbReference>
<dbReference type="HOGENOM" id="CLU_103849_1_2_11"/>
<dbReference type="OrthoDB" id="9803610at2"/>
<dbReference type="PhylomeDB" id="Q1AU53"/>
<dbReference type="Proteomes" id="UP000006637">
    <property type="component" value="Chromosome"/>
</dbReference>
<dbReference type="GO" id="GO:0005829">
    <property type="term" value="C:cytosol"/>
    <property type="evidence" value="ECO:0007669"/>
    <property type="project" value="TreeGrafter"/>
</dbReference>
<dbReference type="GO" id="GO:0015935">
    <property type="term" value="C:small ribosomal subunit"/>
    <property type="evidence" value="ECO:0007669"/>
    <property type="project" value="TreeGrafter"/>
</dbReference>
<dbReference type="GO" id="GO:0019843">
    <property type="term" value="F:rRNA binding"/>
    <property type="evidence" value="ECO:0007669"/>
    <property type="project" value="UniProtKB-UniRule"/>
</dbReference>
<dbReference type="GO" id="GO:0003735">
    <property type="term" value="F:structural constituent of ribosome"/>
    <property type="evidence" value="ECO:0007669"/>
    <property type="project" value="InterPro"/>
</dbReference>
<dbReference type="GO" id="GO:0000049">
    <property type="term" value="F:tRNA binding"/>
    <property type="evidence" value="ECO:0007669"/>
    <property type="project" value="UniProtKB-UniRule"/>
</dbReference>
<dbReference type="GO" id="GO:0006412">
    <property type="term" value="P:translation"/>
    <property type="evidence" value="ECO:0007669"/>
    <property type="project" value="UniProtKB-UniRule"/>
</dbReference>
<dbReference type="FunFam" id="1.10.8.50:FF:000001">
    <property type="entry name" value="30S ribosomal protein S13"/>
    <property type="match status" value="1"/>
</dbReference>
<dbReference type="FunFam" id="4.10.910.10:FF:000001">
    <property type="entry name" value="30S ribosomal protein S13"/>
    <property type="match status" value="1"/>
</dbReference>
<dbReference type="Gene3D" id="1.10.8.50">
    <property type="match status" value="1"/>
</dbReference>
<dbReference type="Gene3D" id="4.10.910.10">
    <property type="entry name" value="30s ribosomal protein s13, domain 2"/>
    <property type="match status" value="1"/>
</dbReference>
<dbReference type="HAMAP" id="MF_01315">
    <property type="entry name" value="Ribosomal_uS13"/>
    <property type="match status" value="1"/>
</dbReference>
<dbReference type="InterPro" id="IPR027437">
    <property type="entry name" value="Rbsml_uS13_C"/>
</dbReference>
<dbReference type="InterPro" id="IPR001892">
    <property type="entry name" value="Ribosomal_uS13"/>
</dbReference>
<dbReference type="InterPro" id="IPR010979">
    <property type="entry name" value="Ribosomal_uS13-like_H2TH"/>
</dbReference>
<dbReference type="InterPro" id="IPR019980">
    <property type="entry name" value="Ribosomal_uS13_bac-type"/>
</dbReference>
<dbReference type="InterPro" id="IPR018269">
    <property type="entry name" value="Ribosomal_uS13_CS"/>
</dbReference>
<dbReference type="NCBIfam" id="TIGR03631">
    <property type="entry name" value="uS13_bact"/>
    <property type="match status" value="1"/>
</dbReference>
<dbReference type="PANTHER" id="PTHR10871">
    <property type="entry name" value="30S RIBOSOMAL PROTEIN S13/40S RIBOSOMAL PROTEIN S18"/>
    <property type="match status" value="1"/>
</dbReference>
<dbReference type="PANTHER" id="PTHR10871:SF1">
    <property type="entry name" value="SMALL RIBOSOMAL SUBUNIT PROTEIN US13M"/>
    <property type="match status" value="1"/>
</dbReference>
<dbReference type="Pfam" id="PF00416">
    <property type="entry name" value="Ribosomal_S13"/>
    <property type="match status" value="1"/>
</dbReference>
<dbReference type="PIRSF" id="PIRSF002134">
    <property type="entry name" value="Ribosomal_S13"/>
    <property type="match status" value="1"/>
</dbReference>
<dbReference type="SUPFAM" id="SSF46946">
    <property type="entry name" value="S13-like H2TH domain"/>
    <property type="match status" value="1"/>
</dbReference>
<dbReference type="PROSITE" id="PS00646">
    <property type="entry name" value="RIBOSOMAL_S13_1"/>
    <property type="match status" value="1"/>
</dbReference>
<dbReference type="PROSITE" id="PS50159">
    <property type="entry name" value="RIBOSOMAL_S13_2"/>
    <property type="match status" value="1"/>
</dbReference>
<reference key="1">
    <citation type="submission" date="2006-06" db="EMBL/GenBank/DDBJ databases">
        <title>Complete sequence of Rubrobacter xylanophilus DSM 9941.</title>
        <authorList>
            <consortium name="US DOE Joint Genome Institute"/>
            <person name="Copeland A."/>
            <person name="Lucas S."/>
            <person name="Lapidus A."/>
            <person name="Barry K."/>
            <person name="Detter J.C."/>
            <person name="Glavina del Rio T."/>
            <person name="Hammon N."/>
            <person name="Israni S."/>
            <person name="Dalin E."/>
            <person name="Tice H."/>
            <person name="Pitluck S."/>
            <person name="Munk A.C."/>
            <person name="Brettin T."/>
            <person name="Bruce D."/>
            <person name="Han C."/>
            <person name="Tapia R."/>
            <person name="Gilna P."/>
            <person name="Schmutz J."/>
            <person name="Larimer F."/>
            <person name="Land M."/>
            <person name="Hauser L."/>
            <person name="Kyrpides N."/>
            <person name="Lykidis A."/>
            <person name="da Costa M.S."/>
            <person name="Rainey F.A."/>
            <person name="Empadinhas N."/>
            <person name="Jolivet E."/>
            <person name="Battista J.R."/>
            <person name="Richardson P."/>
        </authorList>
    </citation>
    <scope>NUCLEOTIDE SEQUENCE [LARGE SCALE GENOMIC DNA]</scope>
    <source>
        <strain>DSM 9941 / JCM 11954 / NBRC 16129 / PRD-1</strain>
    </source>
</reference>
<gene>
    <name evidence="1" type="primary">rpsM</name>
    <name type="ordered locus">Rxyl_2131</name>
</gene>
<accession>Q1AU53</accession>
<organism>
    <name type="scientific">Rubrobacter xylanophilus (strain DSM 9941 / JCM 11954 / NBRC 16129 / PRD-1)</name>
    <dbReference type="NCBI Taxonomy" id="266117"/>
    <lineage>
        <taxon>Bacteria</taxon>
        <taxon>Bacillati</taxon>
        <taxon>Actinomycetota</taxon>
        <taxon>Rubrobacteria</taxon>
        <taxon>Rubrobacterales</taxon>
        <taxon>Rubrobacteraceae</taxon>
        <taxon>Rubrobacter</taxon>
    </lineage>
</organism>
<evidence type="ECO:0000255" key="1">
    <source>
        <dbReference type="HAMAP-Rule" id="MF_01315"/>
    </source>
</evidence>
<evidence type="ECO:0000256" key="2">
    <source>
        <dbReference type="SAM" id="MobiDB-lite"/>
    </source>
</evidence>
<evidence type="ECO:0000305" key="3"/>
<feature type="chain" id="PRO_0000306697" description="Small ribosomal subunit protein uS13">
    <location>
        <begin position="1"/>
        <end position="122"/>
    </location>
</feature>
<feature type="region of interest" description="Disordered" evidence="2">
    <location>
        <begin position="94"/>
        <end position="122"/>
    </location>
</feature>
<proteinExistence type="inferred from homology"/>